<gene>
    <name evidence="5" type="primary">ctsY</name>
</gene>
<keyword id="KW-0119">Carbohydrate metabolism</keyword>
<keyword id="KW-0903">Direct protein sequencing</keyword>
<keyword id="KW-0328">Glycosyltransferase</keyword>
<keyword id="KW-0964">Secreted</keyword>
<keyword id="KW-0732">Signal</keyword>
<keyword id="KW-0808">Transferase</keyword>
<feature type="signal peptide" evidence="3 4">
    <location>
        <begin position="1"/>
        <end position="29"/>
    </location>
</feature>
<feature type="chain" id="PRO_0000459723" description="Isomaltosyltransferase">
    <location>
        <begin position="30"/>
        <end position="1093"/>
    </location>
</feature>
<feature type="domain" description="CBM6" evidence="2">
    <location>
        <begin position="968"/>
        <end position="1091"/>
    </location>
</feature>
<feature type="active site" description="Nucleophile" evidence="1">
    <location>
        <position position="566"/>
    </location>
</feature>
<feature type="active site" evidence="1">
    <location>
        <position position="569"/>
    </location>
</feature>
<feature type="active site" description="Proton donor" evidence="1">
    <location>
        <position position="631"/>
    </location>
</feature>
<dbReference type="EC" id="2.4.1.387" evidence="4"/>
<dbReference type="EMBL" id="AB073929">
    <property type="protein sequence ID" value="BAB88403.1"/>
    <property type="molecule type" value="Genomic_DNA"/>
</dbReference>
<dbReference type="SMR" id="Q8RQV0"/>
<dbReference type="CAZy" id="CBM35">
    <property type="family name" value="Carbohydrate-Binding Module Family 35"/>
</dbReference>
<dbReference type="CAZy" id="GH31">
    <property type="family name" value="Glycoside Hydrolase Family 31"/>
</dbReference>
<dbReference type="KEGG" id="ag:BAB88403"/>
<dbReference type="BioCyc" id="MetaCyc:MONOMER-21806"/>
<dbReference type="GO" id="GO:0005576">
    <property type="term" value="C:extracellular region"/>
    <property type="evidence" value="ECO:0007669"/>
    <property type="project" value="UniProtKB-SubCell"/>
</dbReference>
<dbReference type="GO" id="GO:0030246">
    <property type="term" value="F:carbohydrate binding"/>
    <property type="evidence" value="ECO:0007669"/>
    <property type="project" value="InterPro"/>
</dbReference>
<dbReference type="GO" id="GO:0016757">
    <property type="term" value="F:glycosyltransferase activity"/>
    <property type="evidence" value="ECO:0007669"/>
    <property type="project" value="UniProtKB-KW"/>
</dbReference>
<dbReference type="GO" id="GO:0004553">
    <property type="term" value="F:hydrolase activity, hydrolyzing O-glycosyl compounds"/>
    <property type="evidence" value="ECO:0007669"/>
    <property type="project" value="InterPro"/>
</dbReference>
<dbReference type="GO" id="GO:0005975">
    <property type="term" value="P:carbohydrate metabolic process"/>
    <property type="evidence" value="ECO:0007669"/>
    <property type="project" value="InterPro"/>
</dbReference>
<dbReference type="CDD" id="cd04083">
    <property type="entry name" value="CBM35_Lmo2446-like"/>
    <property type="match status" value="1"/>
</dbReference>
<dbReference type="CDD" id="cd14752">
    <property type="entry name" value="GH31_N"/>
    <property type="match status" value="1"/>
</dbReference>
<dbReference type="CDD" id="cd06597">
    <property type="entry name" value="GH31_transferase_CtsY"/>
    <property type="match status" value="1"/>
</dbReference>
<dbReference type="Gene3D" id="2.60.120.260">
    <property type="entry name" value="Galactose-binding domain-like"/>
    <property type="match status" value="1"/>
</dbReference>
<dbReference type="Gene3D" id="3.20.20.80">
    <property type="entry name" value="Glycosidases"/>
    <property type="match status" value="1"/>
</dbReference>
<dbReference type="Gene3D" id="2.60.40.1760">
    <property type="entry name" value="glycosyl hydrolase (family 31)"/>
    <property type="match status" value="1"/>
</dbReference>
<dbReference type="Gene3D" id="2.60.40.1180">
    <property type="entry name" value="Golgi alpha-mannosidase II"/>
    <property type="match status" value="2"/>
</dbReference>
<dbReference type="Gene3D" id="2.60.40.10">
    <property type="entry name" value="Immunoglobulins"/>
    <property type="match status" value="1"/>
</dbReference>
<dbReference type="InterPro" id="IPR005084">
    <property type="entry name" value="CBM6"/>
</dbReference>
<dbReference type="InterPro" id="IPR006584">
    <property type="entry name" value="Cellulose-bd_IV"/>
</dbReference>
<dbReference type="InterPro" id="IPR011013">
    <property type="entry name" value="Gal_mutarotase_sf_dom"/>
</dbReference>
<dbReference type="InterPro" id="IPR008979">
    <property type="entry name" value="Galactose-bd-like_sf"/>
</dbReference>
<dbReference type="InterPro" id="IPR048395">
    <property type="entry name" value="Glyco_hydro_31_C"/>
</dbReference>
<dbReference type="InterPro" id="IPR025887">
    <property type="entry name" value="Glyco_hydro_31_N_dom"/>
</dbReference>
<dbReference type="InterPro" id="IPR000322">
    <property type="entry name" value="Glyco_hydro_31_TIM"/>
</dbReference>
<dbReference type="InterPro" id="IPR013780">
    <property type="entry name" value="Glyco_hydro_b"/>
</dbReference>
<dbReference type="InterPro" id="IPR017853">
    <property type="entry name" value="Glycoside_hydrolase_SF"/>
</dbReference>
<dbReference type="InterPro" id="IPR051816">
    <property type="entry name" value="Glycosyl_Hydrolase_31"/>
</dbReference>
<dbReference type="InterPro" id="IPR013783">
    <property type="entry name" value="Ig-like_fold"/>
</dbReference>
<dbReference type="InterPro" id="IPR055242">
    <property type="entry name" value="Lmo2446-like_N"/>
</dbReference>
<dbReference type="PANTHER" id="PTHR43863">
    <property type="entry name" value="HYDROLASE, PUTATIVE (AFU_ORTHOLOGUE AFUA_1G03140)-RELATED"/>
    <property type="match status" value="1"/>
</dbReference>
<dbReference type="PANTHER" id="PTHR43863:SF2">
    <property type="entry name" value="MALTASE-GLUCOAMYLASE"/>
    <property type="match status" value="1"/>
</dbReference>
<dbReference type="Pfam" id="PF16990">
    <property type="entry name" value="CBM_35"/>
    <property type="match status" value="1"/>
</dbReference>
<dbReference type="Pfam" id="PF13802">
    <property type="entry name" value="Gal_mutarotas_2"/>
    <property type="match status" value="1"/>
</dbReference>
<dbReference type="Pfam" id="PF01055">
    <property type="entry name" value="Glyco_hydro_31_2nd"/>
    <property type="match status" value="1"/>
</dbReference>
<dbReference type="Pfam" id="PF21365">
    <property type="entry name" value="Glyco_hydro_31_3rd"/>
    <property type="match status" value="1"/>
</dbReference>
<dbReference type="Pfam" id="PF22681">
    <property type="entry name" value="Lmo2446-like_N"/>
    <property type="match status" value="1"/>
</dbReference>
<dbReference type="SMART" id="SM00606">
    <property type="entry name" value="CBD_IV"/>
    <property type="match status" value="1"/>
</dbReference>
<dbReference type="SUPFAM" id="SSF51445">
    <property type="entry name" value="(Trans)glycosidases"/>
    <property type="match status" value="1"/>
</dbReference>
<dbReference type="SUPFAM" id="SSF74650">
    <property type="entry name" value="Galactose mutarotase-like"/>
    <property type="match status" value="1"/>
</dbReference>
<dbReference type="SUPFAM" id="SSF49785">
    <property type="entry name" value="Galactose-binding domain-like"/>
    <property type="match status" value="1"/>
</dbReference>
<dbReference type="SUPFAM" id="SSF51011">
    <property type="entry name" value="Glycosyl hydrolase domain"/>
    <property type="match status" value="1"/>
</dbReference>
<dbReference type="PROSITE" id="PS51175">
    <property type="entry name" value="CBM6"/>
    <property type="match status" value="1"/>
</dbReference>
<comment type="function">
    <text evidence="3 4">Glycosyltransferase involved, together with CtsZ, in the conversion of alpha-1,4-glucan into a cyclic tetrasaccharide (CTS) constructed from four alpha-glucopyranosyl residues (PubMed:12092816, PubMed:12400677). Catalyzes the alpha-(1-&gt;3) transfer of the isomaltosyl moiety of alpha-isomaltosyl-(1-&gt;4)-D-maltotriose to another alpha-isomaltosyl-(1-&gt;4)-D-maltotriose, resulting in alpha-isomaltosyl-(1-&gt;3)-alpha-isomaltosyl-alpha-(1-&gt;4)-maltotriose formation (PubMed:12400677). In addition, the enzyme catalyzes the intramolecular cyclization of the product, generating the cyclic tetrasaccharide cyclobis-(1-&gt;6)-alpha-nigerosyl (PubMed:12400677).</text>
</comment>
<comment type="catalytic activity">
    <reaction evidence="4">
        <text>2 alpha-isomaltosyl-(1-&gt;4)-D-maltotriose = alpha-isomaltosyl-(1-&gt;3)-alpha-isomaltosyl-(1-&gt;4)-D-maltotriose + D-maltotriose</text>
        <dbReference type="Rhea" id="RHEA:70183"/>
        <dbReference type="ChEBI" id="CHEBI:140999"/>
        <dbReference type="ChEBI" id="CHEBI:186601"/>
        <dbReference type="ChEBI" id="CHEBI:187867"/>
        <dbReference type="EC" id="2.4.1.387"/>
    </reaction>
    <physiologicalReaction direction="left-to-right" evidence="4">
        <dbReference type="Rhea" id="RHEA:70184"/>
    </physiologicalReaction>
</comment>
<comment type="catalytic activity">
    <reaction evidence="4">
        <text>alpha-isomaltosyl-(1-&gt;3)-alpha-isomaltosyl-(1-&gt;4)-D-maltotriose = cyclobis-(1-&gt;3)-alpha-D-isomaltosyl + D-maltotriose</text>
        <dbReference type="Rhea" id="RHEA:70187"/>
        <dbReference type="ChEBI" id="CHEBI:136822"/>
        <dbReference type="ChEBI" id="CHEBI:140999"/>
        <dbReference type="ChEBI" id="CHEBI:187867"/>
        <dbReference type="EC" id="2.4.1.387"/>
    </reaction>
    <physiologicalReaction direction="left-to-right" evidence="4">
        <dbReference type="Rhea" id="RHEA:70188"/>
    </physiologicalReaction>
</comment>
<comment type="activity regulation">
    <text evidence="4">Strongly inhibited by Hg(2+) and moderately inhibited by Cu(2+) and Pb(2+) (PubMed:12400677). Other metal ions, Tris and EDTA have almost no effects (PubMed:12400677).</text>
</comment>
<comment type="biophysicochemical properties">
    <phDependence>
        <text evidence="3 4">Optimum pH is 6.0 (PubMed:12092816, PubMed:12400677). Stable in the pH range 4.5 to 9.0 (PubMed:12400677).</text>
    </phDependence>
    <temperatureDependence>
        <text evidence="3 4">Optimum temperature is 50 degrees Celsius.</text>
    </temperatureDependence>
</comment>
<comment type="subcellular location">
    <subcellularLocation>
        <location evidence="3">Secreted</location>
    </subcellularLocation>
</comment>
<comment type="induction">
    <text evidence="3">Part of the ctsUVWXYZ gene cluster, which contains genes for synthesis and transport of CTS.</text>
</comment>
<comment type="similarity">
    <text evidence="7">Belongs to the glycosyl hydrolase 31 family.</text>
</comment>
<evidence type="ECO:0000250" key="1">
    <source>
        <dbReference type="UniProtKB" id="P31434"/>
    </source>
</evidence>
<evidence type="ECO:0000255" key="2">
    <source>
        <dbReference type="PROSITE-ProRule" id="PRU00523"/>
    </source>
</evidence>
<evidence type="ECO:0000269" key="3">
    <source>
    </source>
</evidence>
<evidence type="ECO:0000269" key="4">
    <source>
    </source>
</evidence>
<evidence type="ECO:0000303" key="5">
    <source>
    </source>
</evidence>
<evidence type="ECO:0000303" key="6">
    <source>
    </source>
</evidence>
<evidence type="ECO:0000305" key="7"/>
<organism>
    <name type="scientific">Sporosarcina globispora</name>
    <name type="common">Bacillus globisporus</name>
    <dbReference type="NCBI Taxonomy" id="1459"/>
    <lineage>
        <taxon>Bacteria</taxon>
        <taxon>Bacillati</taxon>
        <taxon>Bacillota</taxon>
        <taxon>Bacilli</taxon>
        <taxon>Bacillales</taxon>
        <taxon>Caryophanaceae</taxon>
        <taxon>Sporosarcina</taxon>
    </lineage>
</organism>
<proteinExistence type="evidence at protein level"/>
<reference key="1">
    <citation type="journal article" date="2002" name="Biosci. Biotechnol. Biochem.">
        <title>Cloning and sequencing of the genes encoding cyclic tetrasaccharide-synthesizing enzymes from Bacillus globisporus C11.</title>
        <authorList>
            <person name="Aga H."/>
            <person name="Maruta K."/>
            <person name="Yamamoto T."/>
            <person name="Kubota M."/>
            <person name="Fukuda S."/>
            <person name="Kurimoto M."/>
            <person name="Tsujisaka Y."/>
        </authorList>
    </citation>
    <scope>NUCLEOTIDE SEQUENCE [GENOMIC DNA]</scope>
    <scope>PROTEIN SEQUENCE OF 30-51; 66-79; 267-286; 292-305; 390-406; 447-465; 482-500; 545-550; 584-597 AND 790-809</scope>
    <scope>FUNCTION</scope>
    <scope>BIOPHYSICOCHEMICAL PROPERTIES</scope>
    <scope>SUBCELLULAR LOCATION</scope>
    <scope>GENE CLUSTER</scope>
    <source>
        <strain>C11</strain>
    </source>
</reference>
<reference key="2">
    <citation type="journal article" date="2002" name="Biosci. Biotechnol. Biochem.">
        <title>Purification and characterization of glucosyltransferase and glucanotransferase involved in the production of cyclic tetrasaccharide in Bacillus globisporus C11.</title>
        <authorList>
            <person name="Nishimoto T."/>
            <person name="Aga H."/>
            <person name="Mukai K."/>
            <person name="Hashimoto T."/>
            <person name="Watanabe H."/>
            <person name="Kubota M."/>
            <person name="Fukuda S."/>
            <person name="Kurimoto M."/>
            <person name="Tsujisaka Y."/>
        </authorList>
    </citation>
    <scope>PROTEIN SEQUENCE OF 30-51</scope>
    <scope>FUNCTION</scope>
    <scope>CATALYTIC ACTIVITY</scope>
    <scope>ACTIVITY REGULATION</scope>
    <scope>BIOPHYSICOCHEMICAL PROPERTIES</scope>
    <source>
        <strain>C11</strain>
    </source>
</reference>
<protein>
    <recommendedName>
        <fullName evidence="6">Isomaltosyltransferase</fullName>
        <shortName evidence="6">IMT</shortName>
        <ecNumber evidence="4">2.4.1.387</ecNumber>
    </recommendedName>
    <alternativeName>
        <fullName evidence="5">Alpha-1,3-isomaltosyltransferase</fullName>
    </alternativeName>
    <alternativeName>
        <fullName evidence="6">CTS-producing enzyme</fullName>
    </alternativeName>
</protein>
<name>CTSY_SPOGL</name>
<accession>Q8RQV0</accession>
<sequence>MYVRNLTGSFRFSLSFLLCFCLFVPSIYAIDGVYHAPYGIDDLYEIQATERSPRDPVAGDTVYIKITTWPIESGQTAWVTWTKNGVNQAAVGAAFKYNSGNNTYWEANLGTFAKGDVISYTVHGNKDGANEKVIGPFTFTVTGWESVSSISSITDNTNRVVLNAVPNTGTLKPKINLSFTADDVLRVQVSPTGTGTLSSGLSNYTVSDTASTTWLTTSKLKVKVDKNPFKLSVYKPDGTTLIARQYDSTTNRNIAWLTNGSTIIDKVEDHFYSPASEEFFGFGEHYNNFRKRGNDVDTYVFNQYKNQNDRTYMAIPFMLNSSGYGIFVNSTYYSKFRLATERTDMFSFTADTGGSAASMLDYYFIYGNDLKNVVSNYANITGKPTALPKWAFGLWMSANEWDRQTKVNTAINNANSNNIPATAVVLEQWSDENTFYIFNDATYTPKTGSAAHAYTDFTFPTSGRWTDPKAMADNVHNNGMKLVLWQVPIQKWTSTPYTQKDNDEAYMTAQNYAVGNGSGGQYRIPSGQWFENSLLLDFTNTAAKNWWMSKRAYLFDGVGIDGFKTDGGEMVWGRSNTFSNGKKGNEMRNQYPNEYVKAYNEYARSKKADAVSFSRSGTQGAQANQIFWSGDQESTFGAFQQAVNAGLTASMSGVPYWSWDMAGFTGTYPTAELYKRATEMAAFAPVMQFHSESNGSSGINEERSPWNAQARTGDNTIISHFAKYTNTRMNLLPYIYSEAKMASDTGVPMMRAMALEYPKDTNTYGLTQQYMFGGNLLIAPVMNQGETNKSIYLPQGDWIDFWFGAQRPGGRTISYTAGIDDLPVFVKFGSILPMNLNAQYQVGGTIGNSLTSYTNLAFRIYPLGTTTYDWNDDIGGSVKTITSTEQYGLNKETVTVPAINSTKTLQVFTTKPSSVTVGGSVMTEYSTLTALTGASTGWYYDTVQKFTYVKLGSSASAQSVVLNGVNKVEYEAEFGVQSGVSTNTNHAGYTGTGFVDGFETLGDNVAFDVSVKAAGTYTMKVRYSSGAGNGSRAIYVNNTKVTDLALPQTTSWDTWGTATFSVSLSTGLNTVKVSYDGTSSLGINFDNIAIVEQ</sequence>